<name>COX2_CYBSA</name>
<evidence type="ECO:0000250" key="1"/>
<evidence type="ECO:0000250" key="2">
    <source>
        <dbReference type="UniProtKB" id="P00410"/>
    </source>
</evidence>
<evidence type="ECO:0000255" key="3"/>
<evidence type="ECO:0000305" key="4"/>
<dbReference type="EC" id="7.1.1.9"/>
<dbReference type="EMBL" id="X02439">
    <property type="protein sequence ID" value="CAA26284.1"/>
    <property type="molecule type" value="Genomic_DNA"/>
</dbReference>
<dbReference type="PIR" id="S07165">
    <property type="entry name" value="OBHQMS"/>
</dbReference>
<dbReference type="SMR" id="P06029"/>
<dbReference type="GO" id="GO:0005743">
    <property type="term" value="C:mitochondrial inner membrane"/>
    <property type="evidence" value="ECO:0007669"/>
    <property type="project" value="UniProtKB-SubCell"/>
</dbReference>
<dbReference type="GO" id="GO:0005507">
    <property type="term" value="F:copper ion binding"/>
    <property type="evidence" value="ECO:0007669"/>
    <property type="project" value="InterPro"/>
</dbReference>
<dbReference type="GO" id="GO:0004129">
    <property type="term" value="F:cytochrome-c oxidase activity"/>
    <property type="evidence" value="ECO:0007669"/>
    <property type="project" value="UniProtKB-EC"/>
</dbReference>
<dbReference type="GO" id="GO:0042773">
    <property type="term" value="P:ATP synthesis coupled electron transport"/>
    <property type="evidence" value="ECO:0007669"/>
    <property type="project" value="TreeGrafter"/>
</dbReference>
<dbReference type="CDD" id="cd13912">
    <property type="entry name" value="CcO_II_C"/>
    <property type="match status" value="1"/>
</dbReference>
<dbReference type="FunFam" id="1.10.287.90:FF:000004">
    <property type="entry name" value="Cytochrome c oxidase subunit 2"/>
    <property type="match status" value="1"/>
</dbReference>
<dbReference type="FunFam" id="2.60.40.420:FF:000001">
    <property type="entry name" value="Cytochrome c oxidase subunit 2"/>
    <property type="match status" value="1"/>
</dbReference>
<dbReference type="Gene3D" id="1.10.287.90">
    <property type="match status" value="1"/>
</dbReference>
<dbReference type="Gene3D" id="2.60.40.420">
    <property type="entry name" value="Cupredoxins - blue copper proteins"/>
    <property type="match status" value="1"/>
</dbReference>
<dbReference type="InterPro" id="IPR045187">
    <property type="entry name" value="CcO_II"/>
</dbReference>
<dbReference type="InterPro" id="IPR002429">
    <property type="entry name" value="CcO_II-like_C"/>
</dbReference>
<dbReference type="InterPro" id="IPR034210">
    <property type="entry name" value="CcO_II_C"/>
</dbReference>
<dbReference type="InterPro" id="IPR001505">
    <property type="entry name" value="Copper_CuA"/>
</dbReference>
<dbReference type="InterPro" id="IPR008972">
    <property type="entry name" value="Cupredoxin"/>
</dbReference>
<dbReference type="InterPro" id="IPR011759">
    <property type="entry name" value="Cyt_c_oxidase_su2_TM_dom"/>
</dbReference>
<dbReference type="InterPro" id="IPR036257">
    <property type="entry name" value="Cyt_c_oxidase_su2_TM_sf"/>
</dbReference>
<dbReference type="PANTHER" id="PTHR22888:SF9">
    <property type="entry name" value="CYTOCHROME C OXIDASE SUBUNIT 2"/>
    <property type="match status" value="1"/>
</dbReference>
<dbReference type="PANTHER" id="PTHR22888">
    <property type="entry name" value="CYTOCHROME C OXIDASE, SUBUNIT II"/>
    <property type="match status" value="1"/>
</dbReference>
<dbReference type="Pfam" id="PF00116">
    <property type="entry name" value="COX2"/>
    <property type="match status" value="1"/>
</dbReference>
<dbReference type="Pfam" id="PF02790">
    <property type="entry name" value="COX2_TM"/>
    <property type="match status" value="1"/>
</dbReference>
<dbReference type="PRINTS" id="PR01166">
    <property type="entry name" value="CYCOXIDASEII"/>
</dbReference>
<dbReference type="SUPFAM" id="SSF49503">
    <property type="entry name" value="Cupredoxins"/>
    <property type="match status" value="1"/>
</dbReference>
<dbReference type="SUPFAM" id="SSF81464">
    <property type="entry name" value="Cytochrome c oxidase subunit II-like, transmembrane region"/>
    <property type="match status" value="1"/>
</dbReference>
<dbReference type="PROSITE" id="PS00078">
    <property type="entry name" value="COX2"/>
    <property type="match status" value="1"/>
</dbReference>
<dbReference type="PROSITE" id="PS50857">
    <property type="entry name" value="COX2_CUA"/>
    <property type="match status" value="1"/>
</dbReference>
<dbReference type="PROSITE" id="PS50999">
    <property type="entry name" value="COX2_TM"/>
    <property type="match status" value="1"/>
</dbReference>
<reference key="1">
    <citation type="journal article" date="1985" name="Curr. Genet.">
        <title>Nucleotide sequence of the mitochondrial cytochrome oxidase subunit II gene in the yeast Hansenula saturnus.</title>
        <authorList>
            <person name="Lawson J.E."/>
            <person name="Deters D.W."/>
        </authorList>
    </citation>
    <scope>NUCLEOTIDE SEQUENCE [GENOMIC DNA]</scope>
</reference>
<accession>P06029</accession>
<geneLocation type="mitochondrion"/>
<sequence>MLLLINNLILNDVPTPWGLYFQDSSTPNQEGIIELHDNIMFYLVLILCTVSWLLFSIVKDSSKNPLPHKYLVHGQTIEIIWTILPAVVLLIIAFPSFILLYLCDEVISPAMTIKAIGLQWYWRYEYSDFINDSGETIEFESYVIPEDLLEDGQLRLLDTDTSVVCPVNTHIRFIVSAADVIHDFAIPSLGIKVVASPGRLNQVSALIQREGVYYGMCSETCGVAHSAMPMKIEVVSTKEFLTWLNEQ</sequence>
<comment type="function">
    <text evidence="2">Component of the cytochrome c oxidase, the last enzyme in the mitochondrial electron transport chain which drives oxidative phosphorylation. The respiratory chain contains 3 multisubunit complexes succinate dehydrogenase (complex II, CII), ubiquinol-cytochrome c oxidoreductase (cytochrome b-c1 complex, complex III, CIII) and cytochrome c oxidase (complex IV, CIV), that cooperate to transfer electrons derived from NADH and succinate to molecular oxygen, creating an electrochemical gradient over the inner membrane that drives transmembrane transport and the ATP synthase. Cytochrome c oxidase is the component of the respiratory chain that catalyzes the reduction of oxygen to water. Electrons originating from reduced cytochrome c in the intermembrane space (IMS) are transferred via the dinuclear copper A center (CU(A)) of subunit 2 and heme A of subunit 1 to the active site in subunit 1, a binuclear center (BNC) formed by heme A3 and copper B (CU(B)). The BNC reduces molecular oxygen to 2 water molecules using 4 electrons from cytochrome c in the IMS and 4 protons from the mitochondrial matrix.</text>
</comment>
<comment type="catalytic activity">
    <reaction evidence="2">
        <text>4 Fe(II)-[cytochrome c] + O2 + 8 H(+)(in) = 4 Fe(III)-[cytochrome c] + 2 H2O + 4 H(+)(out)</text>
        <dbReference type="Rhea" id="RHEA:11436"/>
        <dbReference type="Rhea" id="RHEA-COMP:10350"/>
        <dbReference type="Rhea" id="RHEA-COMP:14399"/>
        <dbReference type="ChEBI" id="CHEBI:15377"/>
        <dbReference type="ChEBI" id="CHEBI:15378"/>
        <dbReference type="ChEBI" id="CHEBI:15379"/>
        <dbReference type="ChEBI" id="CHEBI:29033"/>
        <dbReference type="ChEBI" id="CHEBI:29034"/>
        <dbReference type="EC" id="7.1.1.9"/>
    </reaction>
    <physiologicalReaction direction="left-to-right" evidence="2">
        <dbReference type="Rhea" id="RHEA:11437"/>
    </physiologicalReaction>
</comment>
<comment type="cofactor">
    <cofactor evidence="2">
        <name>Cu cation</name>
        <dbReference type="ChEBI" id="CHEBI:23378"/>
    </cofactor>
    <text evidence="2">Binds a dinuclear copper A center per subunit.</text>
</comment>
<comment type="subunit">
    <text evidence="2">Component of the cytochrome c oxidase (complex IV, CIV), a multisubunit enzyme composed of a catalytic core of 3 subunits and several supernumerary subunits. The complex exists as a monomer or a dimer and forms supercomplexes (SCs) in the inner mitochondrial membrane with ubiquinol-cytochrome c oxidoreductase (cytochrome b-c1 complex, complex III, CIII).</text>
</comment>
<comment type="subcellular location">
    <subcellularLocation>
        <location evidence="2">Mitochondrion inner membrane</location>
        <topology evidence="2">Multi-pass membrane protein</topology>
    </subcellularLocation>
</comment>
<comment type="PTM">
    <text evidence="1">The signal sequence of COX2 is processed by IMP1.</text>
</comment>
<comment type="similarity">
    <text evidence="4">Belongs to the cytochrome c oxidase subunit 2 family.</text>
</comment>
<proteinExistence type="inferred from homology"/>
<protein>
    <recommendedName>
        <fullName>Cytochrome c oxidase subunit 2</fullName>
        <ecNumber>7.1.1.9</ecNumber>
    </recommendedName>
    <alternativeName>
        <fullName>Cytochrome c oxidase polypeptide II</fullName>
    </alternativeName>
</protein>
<feature type="chain" id="PRO_0000006046" description="Cytochrome c oxidase subunit 2">
    <location>
        <begin position="1"/>
        <end position="247"/>
    </location>
</feature>
<feature type="topological domain" description="Mitochondrial intermembrane" evidence="3">
    <location>
        <begin position="12"/>
        <end position="38"/>
    </location>
</feature>
<feature type="transmembrane region" description="Helical" evidence="3">
    <location>
        <begin position="39"/>
        <end position="59"/>
    </location>
</feature>
<feature type="topological domain" description="Mitochondrial matrix" evidence="3">
    <location>
        <begin position="60"/>
        <end position="78"/>
    </location>
</feature>
<feature type="transmembrane region" description="Helical" evidence="3">
    <location>
        <begin position="79"/>
        <end position="101"/>
    </location>
</feature>
<feature type="topological domain" description="Mitochondrial intermembrane" evidence="3">
    <location>
        <begin position="102"/>
        <end position="247"/>
    </location>
</feature>
<feature type="binding site" evidence="2">
    <location>
        <position position="182"/>
    </location>
    <ligand>
        <name>Cu cation</name>
        <dbReference type="ChEBI" id="CHEBI:23378"/>
        <label>A1</label>
    </ligand>
</feature>
<feature type="binding site" evidence="2">
    <location>
        <position position="217"/>
    </location>
    <ligand>
        <name>Cu cation</name>
        <dbReference type="ChEBI" id="CHEBI:23378"/>
        <label>A1</label>
    </ligand>
</feature>
<feature type="binding site" evidence="2">
    <location>
        <position position="217"/>
    </location>
    <ligand>
        <name>Cu cation</name>
        <dbReference type="ChEBI" id="CHEBI:23378"/>
        <label>A2</label>
    </ligand>
</feature>
<feature type="binding site" evidence="2">
    <location>
        <position position="219"/>
    </location>
    <ligand>
        <name>Cu cation</name>
        <dbReference type="ChEBI" id="CHEBI:23378"/>
        <label>A2</label>
    </ligand>
</feature>
<feature type="binding site" evidence="2">
    <location>
        <position position="219"/>
    </location>
    <ligand>
        <name>Mg(2+)</name>
        <dbReference type="ChEBI" id="CHEBI:18420"/>
        <note>ligand shared with subunit 1</note>
    </ligand>
</feature>
<feature type="binding site" evidence="2">
    <location>
        <position position="221"/>
    </location>
    <ligand>
        <name>Cu cation</name>
        <dbReference type="ChEBI" id="CHEBI:23378"/>
        <label>A1</label>
    </ligand>
</feature>
<feature type="binding site" evidence="2">
    <location>
        <position position="221"/>
    </location>
    <ligand>
        <name>Cu cation</name>
        <dbReference type="ChEBI" id="CHEBI:23378"/>
        <label>A2</label>
    </ligand>
</feature>
<feature type="binding site" evidence="2">
    <location>
        <position position="225"/>
    </location>
    <ligand>
        <name>Cu cation</name>
        <dbReference type="ChEBI" id="CHEBI:23378"/>
        <label>A2</label>
    </ligand>
</feature>
<feature type="binding site" evidence="2">
    <location>
        <position position="228"/>
    </location>
    <ligand>
        <name>Cu cation</name>
        <dbReference type="ChEBI" id="CHEBI:23378"/>
        <label>A1</label>
    </ligand>
</feature>
<keyword id="KW-0186">Copper</keyword>
<keyword id="KW-0249">Electron transport</keyword>
<keyword id="KW-0460">Magnesium</keyword>
<keyword id="KW-0472">Membrane</keyword>
<keyword id="KW-0479">Metal-binding</keyword>
<keyword id="KW-0496">Mitochondrion</keyword>
<keyword id="KW-0999">Mitochondrion inner membrane</keyword>
<keyword id="KW-0679">Respiratory chain</keyword>
<keyword id="KW-1278">Translocase</keyword>
<keyword id="KW-0812">Transmembrane</keyword>
<keyword id="KW-1133">Transmembrane helix</keyword>
<keyword id="KW-0813">Transport</keyword>
<organism>
    <name type="scientific">Cyberlindnera saturnus</name>
    <name type="common">Yeast</name>
    <name type="synonym">Williopsis saturnus</name>
    <dbReference type="NCBI Taxonomy" id="907340"/>
    <lineage>
        <taxon>Eukaryota</taxon>
        <taxon>Fungi</taxon>
        <taxon>Dikarya</taxon>
        <taxon>Ascomycota</taxon>
        <taxon>Saccharomycotina</taxon>
        <taxon>Saccharomycetes</taxon>
        <taxon>Phaffomycetales</taxon>
        <taxon>Phaffomycetaceae</taxon>
        <taxon>Cyberlindnera</taxon>
    </lineage>
</organism>
<gene>
    <name type="primary">COX2</name>
    <name type="synonym">OXI1</name>
</gene>